<sequence>MKALTTRQQEVYDLVRDHLAQTGMPPTRAEIAQRLGFRSPNAAEEHLKALARKGVIEIVSGASRGIRLLMEEEEGLPLIGRVAAGEPLLAQQHIEGHYKVDPSLFKPGADFLLRVNGMSMRDIGILDGDLLAVHKTQDVRNGQVVVARIDDEVTVKRLKKQGNIVHLLPENSEFQPIVVDLREQSFTIEGLAVGVIRNGDWI</sequence>
<feature type="chain" id="PRO_1000089607" description="LexA repressor">
    <location>
        <begin position="1"/>
        <end position="202"/>
    </location>
</feature>
<feature type="DNA-binding region" description="H-T-H motif" evidence="1">
    <location>
        <begin position="28"/>
        <end position="48"/>
    </location>
</feature>
<feature type="active site" description="For autocatalytic cleavage activity" evidence="1">
    <location>
        <position position="119"/>
    </location>
</feature>
<feature type="active site" description="For autocatalytic cleavage activity" evidence="1">
    <location>
        <position position="156"/>
    </location>
</feature>
<feature type="site" description="Cleavage; by autolysis" evidence="1">
    <location>
        <begin position="84"/>
        <end position="85"/>
    </location>
</feature>
<proteinExistence type="inferred from homology"/>
<organism>
    <name type="scientific">Yersinia pestis bv. Antiqua (strain Angola)</name>
    <dbReference type="NCBI Taxonomy" id="349746"/>
    <lineage>
        <taxon>Bacteria</taxon>
        <taxon>Pseudomonadati</taxon>
        <taxon>Pseudomonadota</taxon>
        <taxon>Gammaproteobacteria</taxon>
        <taxon>Enterobacterales</taxon>
        <taxon>Yersiniaceae</taxon>
        <taxon>Yersinia</taxon>
    </lineage>
</organism>
<dbReference type="EC" id="3.4.21.88" evidence="1"/>
<dbReference type="EMBL" id="CP000901">
    <property type="protein sequence ID" value="ABX86314.1"/>
    <property type="molecule type" value="Genomic_DNA"/>
</dbReference>
<dbReference type="RefSeq" id="WP_002209090.1">
    <property type="nucleotide sequence ID" value="NZ_CP009935.1"/>
</dbReference>
<dbReference type="SMR" id="A9R273"/>
<dbReference type="GeneID" id="57974290"/>
<dbReference type="KEGG" id="ypg:YpAngola_A1300"/>
<dbReference type="PATRIC" id="fig|349746.12.peg.2263"/>
<dbReference type="GO" id="GO:0003677">
    <property type="term" value="F:DNA binding"/>
    <property type="evidence" value="ECO:0007669"/>
    <property type="project" value="UniProtKB-UniRule"/>
</dbReference>
<dbReference type="GO" id="GO:0004252">
    <property type="term" value="F:serine-type endopeptidase activity"/>
    <property type="evidence" value="ECO:0007669"/>
    <property type="project" value="UniProtKB-UniRule"/>
</dbReference>
<dbReference type="GO" id="GO:0006281">
    <property type="term" value="P:DNA repair"/>
    <property type="evidence" value="ECO:0007669"/>
    <property type="project" value="UniProtKB-UniRule"/>
</dbReference>
<dbReference type="GO" id="GO:0006260">
    <property type="term" value="P:DNA replication"/>
    <property type="evidence" value="ECO:0007669"/>
    <property type="project" value="UniProtKB-UniRule"/>
</dbReference>
<dbReference type="GO" id="GO:0045892">
    <property type="term" value="P:negative regulation of DNA-templated transcription"/>
    <property type="evidence" value="ECO:0007669"/>
    <property type="project" value="UniProtKB-UniRule"/>
</dbReference>
<dbReference type="GO" id="GO:0006508">
    <property type="term" value="P:proteolysis"/>
    <property type="evidence" value="ECO:0007669"/>
    <property type="project" value="InterPro"/>
</dbReference>
<dbReference type="GO" id="GO:0009432">
    <property type="term" value="P:SOS response"/>
    <property type="evidence" value="ECO:0007669"/>
    <property type="project" value="UniProtKB-UniRule"/>
</dbReference>
<dbReference type="CDD" id="cd06529">
    <property type="entry name" value="S24_LexA-like"/>
    <property type="match status" value="1"/>
</dbReference>
<dbReference type="FunFam" id="1.10.10.10:FF:000009">
    <property type="entry name" value="LexA repressor"/>
    <property type="match status" value="1"/>
</dbReference>
<dbReference type="FunFam" id="2.10.109.10:FF:000001">
    <property type="entry name" value="LexA repressor"/>
    <property type="match status" value="1"/>
</dbReference>
<dbReference type="Gene3D" id="2.10.109.10">
    <property type="entry name" value="Umud Fragment, subunit A"/>
    <property type="match status" value="1"/>
</dbReference>
<dbReference type="Gene3D" id="1.10.10.10">
    <property type="entry name" value="Winged helix-like DNA-binding domain superfamily/Winged helix DNA-binding domain"/>
    <property type="match status" value="1"/>
</dbReference>
<dbReference type="HAMAP" id="MF_00015">
    <property type="entry name" value="LexA"/>
    <property type="match status" value="1"/>
</dbReference>
<dbReference type="InterPro" id="IPR006200">
    <property type="entry name" value="LexA"/>
</dbReference>
<dbReference type="InterPro" id="IPR039418">
    <property type="entry name" value="LexA-like"/>
</dbReference>
<dbReference type="InterPro" id="IPR036286">
    <property type="entry name" value="LexA/Signal_pep-like_sf"/>
</dbReference>
<dbReference type="InterPro" id="IPR006199">
    <property type="entry name" value="LexA_DNA-bd_dom"/>
</dbReference>
<dbReference type="InterPro" id="IPR050077">
    <property type="entry name" value="LexA_repressor"/>
</dbReference>
<dbReference type="InterPro" id="IPR006197">
    <property type="entry name" value="Peptidase_S24_LexA"/>
</dbReference>
<dbReference type="InterPro" id="IPR015927">
    <property type="entry name" value="Peptidase_S24_S26A/B/C"/>
</dbReference>
<dbReference type="InterPro" id="IPR036388">
    <property type="entry name" value="WH-like_DNA-bd_sf"/>
</dbReference>
<dbReference type="InterPro" id="IPR036390">
    <property type="entry name" value="WH_DNA-bd_sf"/>
</dbReference>
<dbReference type="NCBIfam" id="TIGR00498">
    <property type="entry name" value="lexA"/>
    <property type="match status" value="1"/>
</dbReference>
<dbReference type="PANTHER" id="PTHR33516">
    <property type="entry name" value="LEXA REPRESSOR"/>
    <property type="match status" value="1"/>
</dbReference>
<dbReference type="PANTHER" id="PTHR33516:SF2">
    <property type="entry name" value="LEXA REPRESSOR-RELATED"/>
    <property type="match status" value="1"/>
</dbReference>
<dbReference type="Pfam" id="PF01726">
    <property type="entry name" value="LexA_DNA_bind"/>
    <property type="match status" value="1"/>
</dbReference>
<dbReference type="Pfam" id="PF00717">
    <property type="entry name" value="Peptidase_S24"/>
    <property type="match status" value="1"/>
</dbReference>
<dbReference type="PRINTS" id="PR00726">
    <property type="entry name" value="LEXASERPTASE"/>
</dbReference>
<dbReference type="SUPFAM" id="SSF51306">
    <property type="entry name" value="LexA/Signal peptidase"/>
    <property type="match status" value="1"/>
</dbReference>
<dbReference type="SUPFAM" id="SSF46785">
    <property type="entry name" value="Winged helix' DNA-binding domain"/>
    <property type="match status" value="1"/>
</dbReference>
<keyword id="KW-0068">Autocatalytic cleavage</keyword>
<keyword id="KW-0227">DNA damage</keyword>
<keyword id="KW-0234">DNA repair</keyword>
<keyword id="KW-0235">DNA replication</keyword>
<keyword id="KW-0238">DNA-binding</keyword>
<keyword id="KW-0378">Hydrolase</keyword>
<keyword id="KW-0678">Repressor</keyword>
<keyword id="KW-0742">SOS response</keyword>
<keyword id="KW-0804">Transcription</keyword>
<keyword id="KW-0805">Transcription regulation</keyword>
<protein>
    <recommendedName>
        <fullName evidence="1">LexA repressor</fullName>
        <ecNumber evidence="1">3.4.21.88</ecNumber>
    </recommendedName>
</protein>
<reference key="1">
    <citation type="journal article" date="2010" name="J. Bacteriol.">
        <title>Genome sequence of the deep-rooted Yersinia pestis strain Angola reveals new insights into the evolution and pangenome of the plague bacterium.</title>
        <authorList>
            <person name="Eppinger M."/>
            <person name="Worsham P.L."/>
            <person name="Nikolich M.P."/>
            <person name="Riley D.R."/>
            <person name="Sebastian Y."/>
            <person name="Mou S."/>
            <person name="Achtman M."/>
            <person name="Lindler L.E."/>
            <person name="Ravel J."/>
        </authorList>
    </citation>
    <scope>NUCLEOTIDE SEQUENCE [LARGE SCALE GENOMIC DNA]</scope>
    <source>
        <strain>Angola</strain>
    </source>
</reference>
<comment type="function">
    <text evidence="1">Represses a number of genes involved in the response to DNA damage (SOS response), including recA and lexA. Binds to the 16 bp palindromic sequence 5'-CTGTATATATATACAG-3'. In the presence of single-stranded DNA, RecA interacts with LexA causing an autocatalytic cleavage which disrupts the DNA-binding part of LexA, leading to derepression of the SOS regulon and eventually DNA repair.</text>
</comment>
<comment type="catalytic activity">
    <reaction evidence="1">
        <text>Hydrolysis of Ala-|-Gly bond in repressor LexA.</text>
        <dbReference type="EC" id="3.4.21.88"/>
    </reaction>
</comment>
<comment type="subunit">
    <text evidence="1">Homodimer.</text>
</comment>
<comment type="similarity">
    <text evidence="1">Belongs to the peptidase S24 family.</text>
</comment>
<evidence type="ECO:0000255" key="1">
    <source>
        <dbReference type="HAMAP-Rule" id="MF_00015"/>
    </source>
</evidence>
<gene>
    <name evidence="1" type="primary">lexA</name>
    <name type="ordered locus">YpAngola_A1300</name>
</gene>
<name>LEXA_YERPG</name>
<accession>A9R273</accession>